<organism>
    <name type="scientific">Homo sapiens</name>
    <name type="common">Human</name>
    <dbReference type="NCBI Taxonomy" id="9606"/>
    <lineage>
        <taxon>Eukaryota</taxon>
        <taxon>Metazoa</taxon>
        <taxon>Chordata</taxon>
        <taxon>Craniata</taxon>
        <taxon>Vertebrata</taxon>
        <taxon>Euteleostomi</taxon>
        <taxon>Mammalia</taxon>
        <taxon>Eutheria</taxon>
        <taxon>Euarchontoglires</taxon>
        <taxon>Primates</taxon>
        <taxon>Haplorrhini</taxon>
        <taxon>Catarrhini</taxon>
        <taxon>Hominidae</taxon>
        <taxon>Homo</taxon>
    </lineage>
</organism>
<protein>
    <recommendedName>
        <fullName>DNA polymerase iota</fullName>
        <ecNumber evidence="5 8 14">2.7.7.7</ecNumber>
    </recommendedName>
    <alternativeName>
        <fullName>Eta2</fullName>
    </alternativeName>
    <alternativeName>
        <fullName>RAD30 homolog B</fullName>
    </alternativeName>
</protein>
<sequence length="740" mass="83006">MEKLGVEPEEEGGGDDDEEDAEAWAMELADVGAAASSQGVHDQVLPTPNASSRVIVHVDLDCFYAQVEMISNPELKDKPLGVQQKYLVVTCNYEARKLGVKKLMNVRDAKEKCPQLVLVNGEDLTRYREMSYKVTELLEEFSPVVERLGFDENFVDLTEMVEKRLQQLQSDELSAVTVSGHVYNNQSINLLDVLHIRLLVGSQIAAEMREAMYNQLGLTGCAGVASNKLLAKLVSGVFKPNQQTVLLPESCQHLIHSLNHIKEIPGIGYKTAKCLEALGINSVRDLQTFSPKILEKELGISVAQRIQKLSFGEDNSPVILSGPPQSFSEEDSFKKCSSEVEAKNKIEELLASLLNRVCQDGRKPHTVRLIIRRYSSEKHYGRESRQCPIPSHVIQKLGTGNYDVMTPMVDILMKLFRNMVNVKMPFHLTLLSVCFCNLKALNTAKKGLIDYYLMPSLSTTSRSGKHSFKMKDTHMEDFPKDKETNRDFLPSGRIESTRTRESPLDTTNFSKEKDINEFPLCSLPEGVDQEVFKQLPVDIQEEILSGKSREKFQGKGSVSCPLHASRGVLSFFSKKQMQDIPINPRDHLSSSKQVSSVSPCEPGTSGFNSSSSSYMSSQKDYSYYLDNRLKDERISQGPKEPQGFHFTNSNPAVSAFHSFPNLQSEQLFSRNHTTDSHKQTVATDSHEGLTENREPDSVDEKITFPSDIDPQVFYELPEAVQKELLAEWKRAGSDFHIGHK</sequence>
<reference key="1">
    <citation type="submission" date="2002-04" db="EMBL/GenBank/DDBJ databases">
        <authorList>
            <consortium name="NIEHS SNPs program"/>
        </authorList>
    </citation>
    <scope>NUCLEOTIDE SEQUENCE [GENOMIC DNA]</scope>
    <scope>VARIANTS GLY-96; MET-261; LYS-276; ARG-474; SER-532 AND ARG-560</scope>
</reference>
<reference key="2">
    <citation type="journal article" date="2005" name="Nature">
        <title>DNA sequence and analysis of human chromosome 18.</title>
        <authorList>
            <person name="Nusbaum C."/>
            <person name="Zody M.C."/>
            <person name="Borowsky M.L."/>
            <person name="Kamal M."/>
            <person name="Kodira C.D."/>
            <person name="Taylor T.D."/>
            <person name="Whittaker C.A."/>
            <person name="Chang J.L."/>
            <person name="Cuomo C.A."/>
            <person name="Dewar K."/>
            <person name="FitzGerald M.G."/>
            <person name="Yang X."/>
            <person name="Abouelleil A."/>
            <person name="Allen N.R."/>
            <person name="Anderson S."/>
            <person name="Bloom T."/>
            <person name="Bugalter B."/>
            <person name="Butler J."/>
            <person name="Cook A."/>
            <person name="DeCaprio D."/>
            <person name="Engels R."/>
            <person name="Garber M."/>
            <person name="Gnirke A."/>
            <person name="Hafez N."/>
            <person name="Hall J.L."/>
            <person name="Norman C.H."/>
            <person name="Itoh T."/>
            <person name="Jaffe D.B."/>
            <person name="Kuroki Y."/>
            <person name="Lehoczky J."/>
            <person name="Lui A."/>
            <person name="Macdonald P."/>
            <person name="Mauceli E."/>
            <person name="Mikkelsen T.S."/>
            <person name="Naylor J.W."/>
            <person name="Nicol R."/>
            <person name="Nguyen C."/>
            <person name="Noguchi H."/>
            <person name="O'Leary S.B."/>
            <person name="Piqani B."/>
            <person name="Smith C.L."/>
            <person name="Talamas J.A."/>
            <person name="Topham K."/>
            <person name="Totoki Y."/>
            <person name="Toyoda A."/>
            <person name="Wain H.M."/>
            <person name="Young S.K."/>
            <person name="Zeng Q."/>
            <person name="Zimmer A.R."/>
            <person name="Fujiyama A."/>
            <person name="Hattori M."/>
            <person name="Birren B.W."/>
            <person name="Sakaki Y."/>
            <person name="Lander E.S."/>
        </authorList>
    </citation>
    <scope>NUCLEOTIDE SEQUENCE [LARGE SCALE GENOMIC DNA]</scope>
</reference>
<reference key="3">
    <citation type="journal article" date="1999" name="Genomics">
        <title>Novel human and mouse homologs of Saccharomyces cerevisiae DNA polymerase eta.</title>
        <authorList>
            <person name="McDonald J.P."/>
            <person name="Rapic-Otrin V."/>
            <person name="Epstein J.A."/>
            <person name="Broughton B.C."/>
            <person name="Wang X."/>
            <person name="Lehmann A.R."/>
            <person name="Wolgemuth D.J."/>
            <person name="Woodgate R."/>
        </authorList>
    </citation>
    <scope>NUCLEOTIDE SEQUENCE [MRNA] OF 4-740</scope>
    <scope>VARIANT THR-731</scope>
    <scope>TISSUE SPECIFICITY</scope>
    <source>
        <tissue>Umbilical vein endothelial cell</tissue>
    </source>
</reference>
<reference key="4">
    <citation type="journal article" date="2001" name="Genome Res.">
        <title>Towards a catalog of human genes and proteins: sequencing and analysis of 500 novel complete protein coding human cDNAs.</title>
        <authorList>
            <person name="Wiemann S."/>
            <person name="Weil B."/>
            <person name="Wellenreuther R."/>
            <person name="Gassenhuber J."/>
            <person name="Glassl S."/>
            <person name="Ansorge W."/>
            <person name="Boecher M."/>
            <person name="Bloecker H."/>
            <person name="Bauersachs S."/>
            <person name="Blum H."/>
            <person name="Lauber J."/>
            <person name="Duesterhoeft A."/>
            <person name="Beyer A."/>
            <person name="Koehrer K."/>
            <person name="Strack N."/>
            <person name="Mewes H.-W."/>
            <person name="Ottenwaelder B."/>
            <person name="Obermaier B."/>
            <person name="Tampe J."/>
            <person name="Heubner D."/>
            <person name="Wambutt R."/>
            <person name="Korn B."/>
            <person name="Klein M."/>
            <person name="Poustka A."/>
        </authorList>
    </citation>
    <scope>NUCLEOTIDE SEQUENCE [LARGE SCALE MRNA] OF 10-740</scope>
    <scope>VARIANT SER-532</scope>
    <source>
        <tissue>Brain</tissue>
    </source>
</reference>
<reference key="5">
    <citation type="journal article" date="2004" name="Genome Res.">
        <title>The status, quality, and expansion of the NIH full-length cDNA project: the Mammalian Gene Collection (MGC).</title>
        <authorList>
            <consortium name="The MGC Project Team"/>
        </authorList>
    </citation>
    <scope>NUCLEOTIDE SEQUENCE [LARGE SCALE MRNA] OF 12-740</scope>
    <source>
        <tissue>Uterus</tissue>
    </source>
</reference>
<reference key="6">
    <citation type="submission" date="2000-03" db="EMBL/GenBank/DDBJ databases">
        <title>Human eta2 gene homologous to bacterial UmuC and Rev1 genes.</title>
        <authorList>
            <person name="Poltoratsky V.P."/>
            <person name="Scharff M.D."/>
        </authorList>
    </citation>
    <scope>NUCLEOTIDE SEQUENCE [MRNA] OF 14-740</scope>
    <scope>VARIANT THR-731</scope>
</reference>
<reference key="7">
    <citation type="journal article" date="2000" name="EMBO J.">
        <title>Misinsertion and bypass of thymine-thymine dimers by human DNA polymerase iota.</title>
        <authorList>
            <person name="Tissier A."/>
            <person name="Frank E.G."/>
            <person name="McDonald J.P."/>
            <person name="Iwai S."/>
            <person name="Hanaoka F."/>
            <person name="Woodgate R."/>
        </authorList>
    </citation>
    <scope>FUNCTION</scope>
    <scope>CATALYTIC ACTIVITY</scope>
</reference>
<reference key="8">
    <citation type="journal article" date="2001" name="Science">
        <title>5'-deoxyribose phosphate lyase activity of human DNA polymerase iota in vitro.</title>
        <authorList>
            <person name="Bebenek K."/>
            <person name="Tissier A."/>
            <person name="Frank E.G."/>
            <person name="McDonald J.P."/>
            <person name="Prasad R."/>
            <person name="Wilson S.H."/>
            <person name="Woodgate R."/>
            <person name="Kunkel T.A."/>
        </authorList>
    </citation>
    <scope>FUNCTION</scope>
    <scope>SCHIFF BASE FORMATION</scope>
</reference>
<reference key="9">
    <citation type="journal article" date="2001" name="EMBO J.">
        <title>Altered nucleotide misinsertion fidelity associated with poliota-dependent replication at the end of a DNA template.</title>
        <authorList>
            <person name="Frank E.G."/>
            <person name="Tissier A."/>
            <person name="McDonald J.P."/>
            <person name="Rapic-Otrin V."/>
            <person name="Zeng X."/>
            <person name="Gearhart P.J."/>
            <person name="Woodgate R."/>
        </authorList>
    </citation>
    <scope>FUNCTION</scope>
    <scope>CATALYTIC ACTIVITY</scope>
    <scope>TISSUE SPECIFICITY</scope>
</reference>
<reference key="10">
    <citation type="journal article" date="2002" name="Nature">
        <title>Induction of somatic hypermutation in immunoglobulin genes is dependent on DNA polymerase iota.</title>
        <authorList>
            <person name="Faili A."/>
            <person name="Aoufouchi S."/>
            <person name="Flatter E."/>
            <person name="Gueranger Q."/>
            <person name="Reynaud C.-A."/>
            <person name="Weill J.-C."/>
        </authorList>
    </citation>
    <scope>FUNCTION</scope>
</reference>
<reference key="11">
    <citation type="journal article" date="2003" name="EMBO J.">
        <title>Localization of DNA polymerases eta and iota to the replication machinery is tightly co-ordinated in human cells.</title>
        <authorList>
            <person name="Kannouche P.L."/>
            <person name="Fernandez de Henestrosa A.R."/>
            <person name="Coull B."/>
            <person name="Vidal A.E."/>
            <person name="Gray C."/>
            <person name="Zicha D."/>
            <person name="Woodgate R."/>
            <person name="Lehmann A.R."/>
        </authorList>
    </citation>
    <scope>SUBCELLULAR LOCATION</scope>
    <scope>INTERACTION WITH POLH</scope>
</reference>
<reference key="12">
    <citation type="journal article" date="2003" name="Genes Dev.">
        <title>A mechanism for the exclusion of low-fidelity human Y-family DNA polymerases from base excision repair.</title>
        <authorList>
            <person name="Haracska L."/>
            <person name="Prakash L."/>
            <person name="Prakash S."/>
        </authorList>
    </citation>
    <scope>FUNCTION</scope>
    <scope>SCHIFF BASE FORMATION</scope>
</reference>
<reference key="13">
    <citation type="journal article" date="2004" name="Mol. Cell. Biol.">
        <title>Efficient and error-free replication past a minor-groove DNA adduct by the sequential action of human DNA polymerases iota and kappa.</title>
        <authorList>
            <person name="Washington M.T."/>
            <person name="Minko I.G."/>
            <person name="Johnson R.E."/>
            <person name="Wolfle W.T."/>
            <person name="Harris T.M."/>
            <person name="Lloyd R.S."/>
            <person name="Prakash S."/>
            <person name="Prakash L."/>
        </authorList>
    </citation>
    <scope>FUNCTION</scope>
</reference>
<reference evidence="18" key="14">
    <citation type="journal article" date="2004" name="Nature">
        <title>Replication by human DNA polymerase-iota occurs by Hoogsteen base-pairing.</title>
        <authorList>
            <person name="Nair D.T."/>
            <person name="Johnson R.E."/>
            <person name="Prakash S."/>
            <person name="Prakash L."/>
            <person name="Aggarwal A.K."/>
        </authorList>
    </citation>
    <scope>X-RAY CRYSTALLOGRAPHY (2.3 ANGSTROMS) OF 52-439 IN COMPLEX WITH DNA; NUCLEOTIDE AND MAGNESIUM</scope>
    <scope>FUNCTION</scope>
    <scope>DOMAIN</scope>
</reference>
<reference evidence="19 20 21 22 23 24" key="15">
    <citation type="journal article" date="2016" name="J. Biol. Chem.">
        <title>Kinetic and Structural Impact of Metal Ions and Genetic Variations on Human DNA Polymerase iota.</title>
        <authorList>
            <person name="Choi J.Y."/>
            <person name="Patra A."/>
            <person name="Yeom M."/>
            <person name="Lee Y.S."/>
            <person name="Zhang Q."/>
            <person name="Egli M."/>
            <person name="Guengerich F.P."/>
        </authorList>
    </citation>
    <scope>X-RAY CRYSTALLOGRAPHY (2.49 ANGSTROMS) OF 26-445 IN COMPLEXES WITH DNA; MAGNESIUM AND MANGANESE</scope>
    <scope>CATALYTIC ACTIVITY</scope>
    <scope>COFACTOR</scope>
    <scope>DOMAIN</scope>
    <scope>MUTAGENESIS OF 1-MET--ALA-25</scope>
    <scope>VARIANT GLY-96</scope>
</reference>
<keyword id="KW-0002">3D-structure</keyword>
<keyword id="KW-0227">DNA damage</keyword>
<keyword id="KW-0234">DNA repair</keyword>
<keyword id="KW-0235">DNA replication</keyword>
<keyword id="KW-0237">DNA synthesis</keyword>
<keyword id="KW-0238">DNA-binding</keyword>
<keyword id="KW-0239">DNA-directed DNA polymerase</keyword>
<keyword id="KW-0460">Magnesium</keyword>
<keyword id="KW-0464">Manganese</keyword>
<keyword id="KW-0479">Metal-binding</keyword>
<keyword id="KW-0515">Mutator protein</keyword>
<keyword id="KW-0548">Nucleotidyltransferase</keyword>
<keyword id="KW-0539">Nucleus</keyword>
<keyword id="KW-1267">Proteomics identification</keyword>
<keyword id="KW-1185">Reference proteome</keyword>
<keyword id="KW-0704">Schiff base</keyword>
<keyword id="KW-0808">Transferase</keyword>
<keyword id="KW-0832">Ubl conjugation</keyword>
<dbReference type="EC" id="2.7.7.7" evidence="5 8 14"/>
<dbReference type="EMBL" id="AY094607">
    <property type="protein sequence ID" value="AAM11872.1"/>
    <property type="status" value="ALT_SEQ"/>
    <property type="molecule type" value="Genomic_DNA"/>
</dbReference>
<dbReference type="EMBL" id="AC093462">
    <property type="status" value="NOT_ANNOTATED_CDS"/>
    <property type="molecule type" value="Genomic_DNA"/>
</dbReference>
<dbReference type="EMBL" id="AF140501">
    <property type="protein sequence ID" value="AAD50381.1"/>
    <property type="status" value="ALT_INIT"/>
    <property type="molecule type" value="mRNA"/>
</dbReference>
<dbReference type="EMBL" id="AL136670">
    <property type="protein sequence ID" value="CAB66605.1"/>
    <property type="status" value="ALT_INIT"/>
    <property type="molecule type" value="mRNA"/>
</dbReference>
<dbReference type="EMBL" id="BC032662">
    <property type="protein sequence ID" value="AAH32662.1"/>
    <property type="status" value="ALT_INIT"/>
    <property type="molecule type" value="mRNA"/>
</dbReference>
<dbReference type="EMBL" id="AF245438">
    <property type="protein sequence ID" value="AAF63383.1"/>
    <property type="status" value="ALT_INIT"/>
    <property type="molecule type" value="mRNA"/>
</dbReference>
<dbReference type="CCDS" id="CCDS11954.2"/>
<dbReference type="RefSeq" id="NP_009126.2">
    <property type="nucleotide sequence ID" value="NM_007195.3"/>
</dbReference>
<dbReference type="PDB" id="1T3N">
    <property type="method" value="X-ray"/>
    <property type="resolution" value="2.30 A"/>
    <property type="chains" value="A/B=52-439"/>
</dbReference>
<dbReference type="PDB" id="1ZET">
    <property type="method" value="X-ray"/>
    <property type="resolution" value="2.30 A"/>
    <property type="chains" value="A=52-439"/>
</dbReference>
<dbReference type="PDB" id="2ALZ">
    <property type="method" value="X-ray"/>
    <property type="resolution" value="2.50 A"/>
    <property type="chains" value="A=50-439"/>
</dbReference>
<dbReference type="PDB" id="2DPI">
    <property type="method" value="X-ray"/>
    <property type="resolution" value="2.30 A"/>
    <property type="chains" value="A=26-445"/>
</dbReference>
<dbReference type="PDB" id="2DPJ">
    <property type="method" value="X-ray"/>
    <property type="resolution" value="2.30 A"/>
    <property type="chains" value="A=26-445"/>
</dbReference>
<dbReference type="PDB" id="2FLL">
    <property type="method" value="X-ray"/>
    <property type="resolution" value="2.60 A"/>
    <property type="chains" value="A=26-445"/>
</dbReference>
<dbReference type="PDB" id="2FLN">
    <property type="method" value="X-ray"/>
    <property type="resolution" value="2.50 A"/>
    <property type="chains" value="A=26-445"/>
</dbReference>
<dbReference type="PDB" id="2FLP">
    <property type="method" value="X-ray"/>
    <property type="resolution" value="2.40 A"/>
    <property type="chains" value="A=26-445"/>
</dbReference>
<dbReference type="PDB" id="2KHU">
    <property type="method" value="NMR"/>
    <property type="chains" value="A=697-740"/>
</dbReference>
<dbReference type="PDB" id="2KHW">
    <property type="method" value="NMR"/>
    <property type="chains" value="A=697-740"/>
</dbReference>
<dbReference type="PDB" id="2KTF">
    <property type="method" value="NMR"/>
    <property type="chains" value="B=704-730"/>
</dbReference>
<dbReference type="PDB" id="2L0F">
    <property type="method" value="NMR"/>
    <property type="chains" value="B=699-740"/>
</dbReference>
<dbReference type="PDB" id="2L0G">
    <property type="method" value="NMR"/>
    <property type="chains" value="A=704-730"/>
</dbReference>
<dbReference type="PDB" id="2MBB">
    <property type="method" value="NMR"/>
    <property type="chains" value="A=516-555"/>
</dbReference>
<dbReference type="PDB" id="3EPG">
    <property type="method" value="X-ray"/>
    <property type="resolution" value="2.50 A"/>
    <property type="chains" value="A=26-445"/>
</dbReference>
<dbReference type="PDB" id="3EPI">
    <property type="method" value="X-ray"/>
    <property type="resolution" value="2.90 A"/>
    <property type="chains" value="A=26-445"/>
</dbReference>
<dbReference type="PDB" id="3G6V">
    <property type="method" value="X-ray"/>
    <property type="resolution" value="2.20 A"/>
    <property type="chains" value="A=26-445"/>
</dbReference>
<dbReference type="PDB" id="3G6X">
    <property type="method" value="X-ray"/>
    <property type="resolution" value="2.08 A"/>
    <property type="chains" value="A=26-445"/>
</dbReference>
<dbReference type="PDB" id="3G6Y">
    <property type="method" value="X-ray"/>
    <property type="resolution" value="2.10 A"/>
    <property type="chains" value="A=26-445"/>
</dbReference>
<dbReference type="PDB" id="3GV5">
    <property type="method" value="X-ray"/>
    <property type="resolution" value="2.00 A"/>
    <property type="chains" value="B/D=26-445"/>
</dbReference>
<dbReference type="PDB" id="3GV7">
    <property type="method" value="X-ray"/>
    <property type="resolution" value="2.20 A"/>
    <property type="chains" value="B=26-445"/>
</dbReference>
<dbReference type="PDB" id="3GV8">
    <property type="method" value="X-ray"/>
    <property type="resolution" value="2.00 A"/>
    <property type="chains" value="B=26-445"/>
</dbReference>
<dbReference type="PDB" id="3H40">
    <property type="method" value="X-ray"/>
    <property type="resolution" value="2.30 A"/>
    <property type="chains" value="A=51-439"/>
</dbReference>
<dbReference type="PDB" id="3H4B">
    <property type="method" value="X-ray"/>
    <property type="resolution" value="2.85 A"/>
    <property type="chains" value="A=50-439"/>
</dbReference>
<dbReference type="PDB" id="3H4D">
    <property type="method" value="X-ray"/>
    <property type="resolution" value="2.20 A"/>
    <property type="chains" value="A=50-439"/>
</dbReference>
<dbReference type="PDB" id="3NGD">
    <property type="method" value="X-ray"/>
    <property type="resolution" value="2.80 A"/>
    <property type="chains" value="A=26-445"/>
</dbReference>
<dbReference type="PDB" id="3OSN">
    <property type="method" value="X-ray"/>
    <property type="resolution" value="1.90 A"/>
    <property type="chains" value="A=26-445"/>
</dbReference>
<dbReference type="PDB" id="3Q8P">
    <property type="method" value="X-ray"/>
    <property type="resolution" value="1.95 A"/>
    <property type="chains" value="B=26-445"/>
</dbReference>
<dbReference type="PDB" id="3Q8Q">
    <property type="method" value="X-ray"/>
    <property type="resolution" value="2.03 A"/>
    <property type="chains" value="B=26-445"/>
</dbReference>
<dbReference type="PDB" id="3Q8R">
    <property type="method" value="X-ray"/>
    <property type="resolution" value="2.45 A"/>
    <property type="chains" value="B=26-445"/>
</dbReference>
<dbReference type="PDB" id="3Q8S">
    <property type="method" value="X-ray"/>
    <property type="resolution" value="2.09 A"/>
    <property type="chains" value="B=26-445"/>
</dbReference>
<dbReference type="PDB" id="4EBC">
    <property type="method" value="X-ray"/>
    <property type="resolution" value="2.90 A"/>
    <property type="chains" value="A=26-445"/>
</dbReference>
<dbReference type="PDB" id="4EBD">
    <property type="method" value="X-ray"/>
    <property type="resolution" value="2.57 A"/>
    <property type="chains" value="A=26-445"/>
</dbReference>
<dbReference type="PDB" id="4EBE">
    <property type="method" value="X-ray"/>
    <property type="resolution" value="2.10 A"/>
    <property type="chains" value="A=26-445"/>
</dbReference>
<dbReference type="PDB" id="4EYH">
    <property type="method" value="X-ray"/>
    <property type="resolution" value="2.90 A"/>
    <property type="chains" value="B=26-445"/>
</dbReference>
<dbReference type="PDB" id="4EYI">
    <property type="method" value="X-ray"/>
    <property type="resolution" value="2.90 A"/>
    <property type="chains" value="B=26-445"/>
</dbReference>
<dbReference type="PDB" id="4FS1">
    <property type="method" value="X-ray"/>
    <property type="resolution" value="2.50 A"/>
    <property type="chains" value="A=26-445"/>
</dbReference>
<dbReference type="PDB" id="4FS2">
    <property type="method" value="X-ray"/>
    <property type="resolution" value="2.05 A"/>
    <property type="chains" value="A=26-445"/>
</dbReference>
<dbReference type="PDB" id="5KT2">
    <property type="method" value="X-ray"/>
    <property type="resolution" value="2.49 A"/>
    <property type="chains" value="A=26-445"/>
</dbReference>
<dbReference type="PDB" id="5KT3">
    <property type="method" value="X-ray"/>
    <property type="resolution" value="2.64 A"/>
    <property type="chains" value="A=26-445"/>
</dbReference>
<dbReference type="PDB" id="5KT4">
    <property type="method" value="X-ray"/>
    <property type="resolution" value="2.78 A"/>
    <property type="chains" value="A=1-445"/>
</dbReference>
<dbReference type="PDB" id="5KT5">
    <property type="method" value="X-ray"/>
    <property type="resolution" value="2.80 A"/>
    <property type="chains" value="A=1-445"/>
</dbReference>
<dbReference type="PDB" id="5KT6">
    <property type="method" value="X-ray"/>
    <property type="resolution" value="3.54 A"/>
    <property type="chains" value="A=1-445"/>
</dbReference>
<dbReference type="PDB" id="5KT7">
    <property type="method" value="X-ray"/>
    <property type="resolution" value="3.15 A"/>
    <property type="chains" value="A=1-445"/>
</dbReference>
<dbReference type="PDB" id="5ULW">
    <property type="method" value="X-ray"/>
    <property type="resolution" value="2.62 A"/>
    <property type="chains" value="A=26-445"/>
</dbReference>
<dbReference type="PDB" id="5ULX">
    <property type="method" value="X-ray"/>
    <property type="resolution" value="1.96 A"/>
    <property type="chains" value="A=26-445"/>
</dbReference>
<dbReference type="PDBsum" id="1T3N"/>
<dbReference type="PDBsum" id="1ZET"/>
<dbReference type="PDBsum" id="2ALZ"/>
<dbReference type="PDBsum" id="2DPI"/>
<dbReference type="PDBsum" id="2DPJ"/>
<dbReference type="PDBsum" id="2FLL"/>
<dbReference type="PDBsum" id="2FLN"/>
<dbReference type="PDBsum" id="2FLP"/>
<dbReference type="PDBsum" id="2KHU"/>
<dbReference type="PDBsum" id="2KHW"/>
<dbReference type="PDBsum" id="2KTF"/>
<dbReference type="PDBsum" id="2L0F"/>
<dbReference type="PDBsum" id="2L0G"/>
<dbReference type="PDBsum" id="2MBB"/>
<dbReference type="PDBsum" id="3EPG"/>
<dbReference type="PDBsum" id="3EPI"/>
<dbReference type="PDBsum" id="3G6V"/>
<dbReference type="PDBsum" id="3G6X"/>
<dbReference type="PDBsum" id="3G6Y"/>
<dbReference type="PDBsum" id="3GV5"/>
<dbReference type="PDBsum" id="3GV7"/>
<dbReference type="PDBsum" id="3GV8"/>
<dbReference type="PDBsum" id="3H40"/>
<dbReference type="PDBsum" id="3H4B"/>
<dbReference type="PDBsum" id="3H4D"/>
<dbReference type="PDBsum" id="3NGD"/>
<dbReference type="PDBsum" id="3OSN"/>
<dbReference type="PDBsum" id="3Q8P"/>
<dbReference type="PDBsum" id="3Q8Q"/>
<dbReference type="PDBsum" id="3Q8R"/>
<dbReference type="PDBsum" id="3Q8S"/>
<dbReference type="PDBsum" id="4EBC"/>
<dbReference type="PDBsum" id="4EBD"/>
<dbReference type="PDBsum" id="4EBE"/>
<dbReference type="PDBsum" id="4EYH"/>
<dbReference type="PDBsum" id="4EYI"/>
<dbReference type="PDBsum" id="4FS1"/>
<dbReference type="PDBsum" id="4FS2"/>
<dbReference type="PDBsum" id="5KT2"/>
<dbReference type="PDBsum" id="5KT3"/>
<dbReference type="PDBsum" id="5KT4"/>
<dbReference type="PDBsum" id="5KT5"/>
<dbReference type="PDBsum" id="5KT6"/>
<dbReference type="PDBsum" id="5KT7"/>
<dbReference type="PDBsum" id="5ULW"/>
<dbReference type="PDBsum" id="5ULX"/>
<dbReference type="SMR" id="Q9UNA4"/>
<dbReference type="BioGRID" id="116370">
    <property type="interactions" value="29"/>
</dbReference>
<dbReference type="FunCoup" id="Q9UNA4">
    <property type="interactions" value="2196"/>
</dbReference>
<dbReference type="IntAct" id="Q9UNA4">
    <property type="interactions" value="25"/>
</dbReference>
<dbReference type="MINT" id="Q9UNA4"/>
<dbReference type="STRING" id="9606.ENSP00000462664"/>
<dbReference type="BindingDB" id="Q9UNA4"/>
<dbReference type="ChEMBL" id="CHEMBL5391"/>
<dbReference type="DrugCentral" id="Q9UNA4"/>
<dbReference type="GlyGen" id="Q9UNA4">
    <property type="glycosylation" value="1 site, 1 O-linked glycan (1 site)"/>
</dbReference>
<dbReference type="iPTMnet" id="Q9UNA4"/>
<dbReference type="PhosphoSitePlus" id="Q9UNA4"/>
<dbReference type="BioMuta" id="POLI"/>
<dbReference type="DMDM" id="327478565"/>
<dbReference type="jPOST" id="Q9UNA4"/>
<dbReference type="MassIVE" id="Q9UNA4"/>
<dbReference type="PaxDb" id="9606-ENSP00000462664"/>
<dbReference type="PeptideAtlas" id="Q9UNA4"/>
<dbReference type="ProteomicsDB" id="85277"/>
<dbReference type="Pumba" id="Q9UNA4"/>
<dbReference type="Antibodypedia" id="1864">
    <property type="antibodies" value="491 antibodies from 31 providers"/>
</dbReference>
<dbReference type="DNASU" id="11201"/>
<dbReference type="Ensembl" id="ENST00000579534.6">
    <property type="protein sequence ID" value="ENSP00000462664.1"/>
    <property type="gene ID" value="ENSG00000101751.11"/>
</dbReference>
<dbReference type="GeneID" id="11201"/>
<dbReference type="KEGG" id="hsa:11201"/>
<dbReference type="MANE-Select" id="ENST00000579534.6">
    <property type="protein sequence ID" value="ENSP00000462664.1"/>
    <property type="RefSeq nucleotide sequence ID" value="NM_007195.3"/>
    <property type="RefSeq protein sequence ID" value="NP_009126.2"/>
</dbReference>
<dbReference type="UCSC" id="uc002lfj.5">
    <property type="organism name" value="human"/>
</dbReference>
<dbReference type="AGR" id="HGNC:9182"/>
<dbReference type="CTD" id="11201"/>
<dbReference type="DisGeNET" id="11201"/>
<dbReference type="GeneCards" id="POLI"/>
<dbReference type="HGNC" id="HGNC:9182">
    <property type="gene designation" value="POLI"/>
</dbReference>
<dbReference type="HPA" id="ENSG00000101751">
    <property type="expression patterns" value="Low tissue specificity"/>
</dbReference>
<dbReference type="MIM" id="605252">
    <property type="type" value="gene"/>
</dbReference>
<dbReference type="neXtProt" id="NX_Q9UNA4"/>
<dbReference type="OpenTargets" id="ENSG00000101751"/>
<dbReference type="PharmGKB" id="PA33502"/>
<dbReference type="VEuPathDB" id="HostDB:ENSG00000101751"/>
<dbReference type="eggNOG" id="KOG2095">
    <property type="taxonomic scope" value="Eukaryota"/>
</dbReference>
<dbReference type="GeneTree" id="ENSGT00940000159487"/>
<dbReference type="HOGENOM" id="CLU_012348_9_0_1"/>
<dbReference type="InParanoid" id="Q9UNA4"/>
<dbReference type="OMA" id="GNCDVMT"/>
<dbReference type="OrthoDB" id="447129at2759"/>
<dbReference type="PAN-GO" id="Q9UNA4">
    <property type="GO annotations" value="2 GO annotations based on evolutionary models"/>
</dbReference>
<dbReference type="PhylomeDB" id="Q9UNA4"/>
<dbReference type="TreeFam" id="TF324222"/>
<dbReference type="BRENDA" id="2.7.7.7">
    <property type="organism ID" value="2681"/>
</dbReference>
<dbReference type="PathwayCommons" id="Q9UNA4"/>
<dbReference type="Reactome" id="R-HSA-5656121">
    <property type="pathway name" value="Translesion synthesis by POLI"/>
</dbReference>
<dbReference type="Reactome" id="R-HSA-5656169">
    <property type="pathway name" value="Termination of translesion DNA synthesis"/>
</dbReference>
<dbReference type="SignaLink" id="Q9UNA4"/>
<dbReference type="BioGRID-ORCS" id="11201">
    <property type="hits" value="16 hits in 1160 CRISPR screens"/>
</dbReference>
<dbReference type="ChiTaRS" id="POLI">
    <property type="organism name" value="human"/>
</dbReference>
<dbReference type="EvolutionaryTrace" id="Q9UNA4"/>
<dbReference type="GeneWiki" id="POLI"/>
<dbReference type="GenomeRNAi" id="11201"/>
<dbReference type="Pharos" id="Q9UNA4">
    <property type="development level" value="Tchem"/>
</dbReference>
<dbReference type="PRO" id="PR:Q9UNA4"/>
<dbReference type="Proteomes" id="UP000005640">
    <property type="component" value="Chromosome 18"/>
</dbReference>
<dbReference type="RNAct" id="Q9UNA4">
    <property type="molecule type" value="protein"/>
</dbReference>
<dbReference type="Bgee" id="ENSG00000101751">
    <property type="expression patterns" value="Expressed in calcaneal tendon and 191 other cell types or tissues"/>
</dbReference>
<dbReference type="ExpressionAtlas" id="Q9UNA4">
    <property type="expression patterns" value="baseline and differential"/>
</dbReference>
<dbReference type="GO" id="GO:0036464">
    <property type="term" value="C:cytoplasmic ribonucleoprotein granule"/>
    <property type="evidence" value="ECO:0000314"/>
    <property type="project" value="HPA"/>
</dbReference>
<dbReference type="GO" id="GO:0016607">
    <property type="term" value="C:nuclear speck"/>
    <property type="evidence" value="ECO:0000314"/>
    <property type="project" value="HPA"/>
</dbReference>
<dbReference type="GO" id="GO:0005654">
    <property type="term" value="C:nucleoplasm"/>
    <property type="evidence" value="ECO:0000304"/>
    <property type="project" value="Reactome"/>
</dbReference>
<dbReference type="GO" id="GO:0003684">
    <property type="term" value="F:damaged DNA binding"/>
    <property type="evidence" value="ECO:0007669"/>
    <property type="project" value="InterPro"/>
</dbReference>
<dbReference type="GO" id="GO:0003887">
    <property type="term" value="F:DNA-directed DNA polymerase activity"/>
    <property type="evidence" value="ECO:0000318"/>
    <property type="project" value="GO_Central"/>
</dbReference>
<dbReference type="GO" id="GO:0046872">
    <property type="term" value="F:metal ion binding"/>
    <property type="evidence" value="ECO:0007669"/>
    <property type="project" value="UniProtKB-KW"/>
</dbReference>
<dbReference type="GO" id="GO:0006281">
    <property type="term" value="P:DNA repair"/>
    <property type="evidence" value="ECO:0000304"/>
    <property type="project" value="ProtInc"/>
</dbReference>
<dbReference type="GO" id="GO:0006260">
    <property type="term" value="P:DNA replication"/>
    <property type="evidence" value="ECO:0007669"/>
    <property type="project" value="UniProtKB-KW"/>
</dbReference>
<dbReference type="GO" id="GO:0042276">
    <property type="term" value="P:error-prone translesion synthesis"/>
    <property type="evidence" value="ECO:0000304"/>
    <property type="project" value="Reactome"/>
</dbReference>
<dbReference type="GO" id="GO:0019985">
    <property type="term" value="P:translesion synthesis"/>
    <property type="evidence" value="ECO:0000318"/>
    <property type="project" value="GO_Central"/>
</dbReference>
<dbReference type="CDD" id="cd01703">
    <property type="entry name" value="PolY_Pol_iota"/>
    <property type="match status" value="1"/>
</dbReference>
<dbReference type="FunFam" id="1.10.150.20:FF:000052">
    <property type="entry name" value="DNA polymerase iota"/>
    <property type="match status" value="1"/>
</dbReference>
<dbReference type="FunFam" id="3.40.1170.60:FF:000007">
    <property type="entry name" value="DNA polymerase iota"/>
    <property type="match status" value="1"/>
</dbReference>
<dbReference type="FunFam" id="3.30.1490.100:FF:000003">
    <property type="entry name" value="Polymerase (DNA directed) iota"/>
    <property type="match status" value="1"/>
</dbReference>
<dbReference type="FunFam" id="3.30.70.270:FF:000013">
    <property type="entry name" value="Polymerase (DNA directed) iota"/>
    <property type="match status" value="1"/>
</dbReference>
<dbReference type="Gene3D" id="3.30.70.270">
    <property type="match status" value="1"/>
</dbReference>
<dbReference type="Gene3D" id="3.40.1170.60">
    <property type="match status" value="1"/>
</dbReference>
<dbReference type="Gene3D" id="6.10.250.1630">
    <property type="match status" value="2"/>
</dbReference>
<dbReference type="Gene3D" id="1.10.150.20">
    <property type="entry name" value="5' to 3' exonuclease, C-terminal subdomain"/>
    <property type="match status" value="1"/>
</dbReference>
<dbReference type="Gene3D" id="3.30.1490.100">
    <property type="entry name" value="DNA polymerase, Y-family, little finger domain"/>
    <property type="match status" value="1"/>
</dbReference>
<dbReference type="IDEAL" id="IID00106"/>
<dbReference type="InterPro" id="IPR043502">
    <property type="entry name" value="DNA/RNA_pol_sf"/>
</dbReference>
<dbReference type="InterPro" id="IPR036775">
    <property type="entry name" value="DNA_pol_Y-fam_lit_finger_sf"/>
</dbReference>
<dbReference type="InterPro" id="IPR017961">
    <property type="entry name" value="DNA_pol_Y-fam_little_finger"/>
</dbReference>
<dbReference type="InterPro" id="IPR025527">
    <property type="entry name" value="HUWE1/Rev1_UBM"/>
</dbReference>
<dbReference type="InterPro" id="IPR053848">
    <property type="entry name" value="IMS_HHH_1"/>
</dbReference>
<dbReference type="InterPro" id="IPR043128">
    <property type="entry name" value="Rev_trsase/Diguanyl_cyclase"/>
</dbReference>
<dbReference type="InterPro" id="IPR001126">
    <property type="entry name" value="UmuC"/>
</dbReference>
<dbReference type="PANTHER" id="PTHR46404">
    <property type="entry name" value="DNA POLYMERASE IOTA"/>
    <property type="match status" value="1"/>
</dbReference>
<dbReference type="PANTHER" id="PTHR46404:SF1">
    <property type="entry name" value="DNA POLYMERASE IOTA"/>
    <property type="match status" value="1"/>
</dbReference>
<dbReference type="Pfam" id="PF00817">
    <property type="entry name" value="IMS"/>
    <property type="match status" value="1"/>
</dbReference>
<dbReference type="Pfam" id="PF11799">
    <property type="entry name" value="IMS_C"/>
    <property type="match status" value="1"/>
</dbReference>
<dbReference type="Pfam" id="PF21999">
    <property type="entry name" value="IMS_HHH_1"/>
    <property type="match status" value="1"/>
</dbReference>
<dbReference type="Pfam" id="PF14377">
    <property type="entry name" value="UBM"/>
    <property type="match status" value="2"/>
</dbReference>
<dbReference type="PIRSF" id="PIRSF036603">
    <property type="entry name" value="DPol_eta"/>
    <property type="match status" value="1"/>
</dbReference>
<dbReference type="SUPFAM" id="SSF56672">
    <property type="entry name" value="DNA/RNA polymerases"/>
    <property type="match status" value="1"/>
</dbReference>
<dbReference type="SUPFAM" id="SSF100879">
    <property type="entry name" value="Lesion bypass DNA polymerase (Y-family), little finger domain"/>
    <property type="match status" value="1"/>
</dbReference>
<dbReference type="PROSITE" id="PS50173">
    <property type="entry name" value="UMUC"/>
    <property type="match status" value="1"/>
</dbReference>
<evidence type="ECO:0000250" key="1">
    <source>
        <dbReference type="UniProtKB" id="Q6R3M4"/>
    </source>
</evidence>
<evidence type="ECO:0000255" key="2">
    <source>
        <dbReference type="PROSITE-ProRule" id="PRU00216"/>
    </source>
</evidence>
<evidence type="ECO:0000256" key="3">
    <source>
        <dbReference type="SAM" id="MobiDB-lite"/>
    </source>
</evidence>
<evidence type="ECO:0000269" key="4">
    <source>
    </source>
</evidence>
<evidence type="ECO:0000269" key="5">
    <source>
    </source>
</evidence>
<evidence type="ECO:0000269" key="6">
    <source>
    </source>
</evidence>
<evidence type="ECO:0000269" key="7">
    <source>
    </source>
</evidence>
<evidence type="ECO:0000269" key="8">
    <source>
    </source>
</evidence>
<evidence type="ECO:0000269" key="9">
    <source>
    </source>
</evidence>
<evidence type="ECO:0000269" key="10">
    <source>
    </source>
</evidence>
<evidence type="ECO:0000269" key="11">
    <source>
    </source>
</evidence>
<evidence type="ECO:0000269" key="12">
    <source>
    </source>
</evidence>
<evidence type="ECO:0000269" key="13">
    <source>
    </source>
</evidence>
<evidence type="ECO:0000269" key="14">
    <source>
    </source>
</evidence>
<evidence type="ECO:0000269" key="15">
    <source ref="1"/>
</evidence>
<evidence type="ECO:0000269" key="16">
    <source ref="6"/>
</evidence>
<evidence type="ECO:0000305" key="17"/>
<evidence type="ECO:0007744" key="18">
    <source>
        <dbReference type="PDB" id="1T3N"/>
    </source>
</evidence>
<evidence type="ECO:0007744" key="19">
    <source>
        <dbReference type="PDB" id="5KT2"/>
    </source>
</evidence>
<evidence type="ECO:0007744" key="20">
    <source>
        <dbReference type="PDB" id="5KT3"/>
    </source>
</evidence>
<evidence type="ECO:0007744" key="21">
    <source>
        <dbReference type="PDB" id="5KT4"/>
    </source>
</evidence>
<evidence type="ECO:0007744" key="22">
    <source>
        <dbReference type="PDB" id="5KT5"/>
    </source>
</evidence>
<evidence type="ECO:0007744" key="23">
    <source>
        <dbReference type="PDB" id="5KT6"/>
    </source>
</evidence>
<evidence type="ECO:0007744" key="24">
    <source>
        <dbReference type="PDB" id="5KT7"/>
    </source>
</evidence>
<evidence type="ECO:0007829" key="25">
    <source>
        <dbReference type="PDB" id="1T3N"/>
    </source>
</evidence>
<evidence type="ECO:0007829" key="26">
    <source>
        <dbReference type="PDB" id="1ZET"/>
    </source>
</evidence>
<evidence type="ECO:0007829" key="27">
    <source>
        <dbReference type="PDB" id="2ALZ"/>
    </source>
</evidence>
<evidence type="ECO:0007829" key="28">
    <source>
        <dbReference type="PDB" id="2FLN"/>
    </source>
</evidence>
<evidence type="ECO:0007829" key="29">
    <source>
        <dbReference type="PDB" id="2KHU"/>
    </source>
</evidence>
<evidence type="ECO:0007829" key="30">
    <source>
        <dbReference type="PDB" id="2L0G"/>
    </source>
</evidence>
<evidence type="ECO:0007829" key="31">
    <source>
        <dbReference type="PDB" id="2MBB"/>
    </source>
</evidence>
<evidence type="ECO:0007829" key="32">
    <source>
        <dbReference type="PDB" id="3EPG"/>
    </source>
</evidence>
<evidence type="ECO:0007829" key="33">
    <source>
        <dbReference type="PDB" id="3H40"/>
    </source>
</evidence>
<evidence type="ECO:0007829" key="34">
    <source>
        <dbReference type="PDB" id="3H4D"/>
    </source>
</evidence>
<evidence type="ECO:0007829" key="35">
    <source>
        <dbReference type="PDB" id="3OSN"/>
    </source>
</evidence>
<comment type="function">
    <text evidence="5 7 8 9 11 12 13">Error-prone DNA polymerase specifically involved in DNA repair (PubMed:11013228, PubMed:11387224). Plays an important role in translesion synthesis, where the normal high-fidelity DNA polymerases cannot proceed and DNA synthesis stalls (PubMed:11013228, PubMed:11387224, PubMed:14630940, PubMed:15199127). Favors Hoogsteen base-pairing in the active site (PubMed:15254543). Inserts the correct base with high-fidelity opposite an adenosine template (PubMed:15254543). Exhibits low fidelity and efficiency opposite a thymidine template, where it will preferentially insert guanosine (PubMed:11013228). May play a role in hypermutation of immunoglobulin genes (PubMed:12410315). Forms a Schiff base with 5'-deoxyribose phosphate at abasic sites, but may not have lyase activity (PubMed:11251121, PubMed:14630940).</text>
</comment>
<comment type="catalytic activity">
    <reaction evidence="5 8 14">
        <text>DNA(n) + a 2'-deoxyribonucleoside 5'-triphosphate = DNA(n+1) + diphosphate</text>
        <dbReference type="Rhea" id="RHEA:22508"/>
        <dbReference type="Rhea" id="RHEA-COMP:17339"/>
        <dbReference type="Rhea" id="RHEA-COMP:17340"/>
        <dbReference type="ChEBI" id="CHEBI:33019"/>
        <dbReference type="ChEBI" id="CHEBI:61560"/>
        <dbReference type="ChEBI" id="CHEBI:173112"/>
        <dbReference type="EC" id="2.7.7.7"/>
    </reaction>
</comment>
<comment type="cofactor">
    <cofactor evidence="14">
        <name>Mg(2+)</name>
        <dbReference type="ChEBI" id="CHEBI:18420"/>
    </cofactor>
    <cofactor evidence="14">
        <name>Mn(2+)</name>
        <dbReference type="ChEBI" id="CHEBI:29035"/>
    </cofactor>
    <text evidence="14">Binds nucleotide much more tightly and catalyzes nucleotide insertion much more efficiently in the presence of Mg(2+) than in the presence of Mn(2+).</text>
</comment>
<comment type="subunit">
    <text evidence="1 10">Interacts with POLH (PubMed:12606586). Interacts with REV1 (By similarity). Interacts with ubiquitin (By similarity).</text>
</comment>
<comment type="interaction">
    <interactant intactId="EBI-741774">
        <id>Q9UNA4</id>
    </interactant>
    <interactant intactId="EBI-724310">
        <id>Q15038</id>
        <label>DAZAP2</label>
    </interactant>
    <organismsDiffer>false</organismsDiffer>
    <experiments>3</experiments>
</comment>
<comment type="interaction">
    <interactant intactId="EBI-741774">
        <id>Q9UNA4</id>
    </interactant>
    <interactant intactId="EBI-748420">
        <id>Q9NSC5</id>
        <label>HOMER3</label>
    </interactant>
    <organismsDiffer>false</organismsDiffer>
    <experiments>3</experiments>
</comment>
<comment type="interaction">
    <interactant intactId="EBI-741774">
        <id>Q9UNA4</id>
    </interactant>
    <interactant intactId="EBI-399080">
        <id>Q92993</id>
        <label>KAT5</label>
    </interactant>
    <organismsDiffer>false</organismsDiffer>
    <experiments>3</experiments>
</comment>
<comment type="interaction">
    <interactant intactId="EBI-741774">
        <id>Q9UNA4</id>
    </interactant>
    <interactant intactId="EBI-11742507">
        <id>Q8TAP4-4</id>
        <label>LMO3</label>
    </interactant>
    <organismsDiffer>false</organismsDiffer>
    <experiments>3</experiments>
</comment>
<comment type="interaction">
    <interactant intactId="EBI-741774">
        <id>Q9UNA4</id>
    </interactant>
    <interactant intactId="EBI-716247">
        <id>Q15843</id>
        <label>NEDD8</label>
    </interactant>
    <organismsDiffer>false</organismsDiffer>
    <experiments>2</experiments>
</comment>
<comment type="interaction">
    <interactant intactId="EBI-741774">
        <id>Q9UNA4</id>
    </interactant>
    <interactant intactId="EBI-8469539">
        <id>Q6FI35</id>
        <label>PCNA</label>
    </interactant>
    <organismsDiffer>false</organismsDiffer>
    <experiments>2</experiments>
</comment>
<comment type="interaction">
    <interactant intactId="EBI-741774">
        <id>Q9UNA4</id>
    </interactant>
    <interactant intactId="EBI-1383528">
        <id>P17252</id>
        <label>PRKCA</label>
    </interactant>
    <organismsDiffer>false</organismsDiffer>
    <experiments>3</experiments>
</comment>
<comment type="interaction">
    <interactant intactId="EBI-741774">
        <id>Q9UNA4</id>
    </interactant>
    <interactant intactId="EBI-9090795">
        <id>Q15047-2</id>
        <label>SETDB1</label>
    </interactant>
    <organismsDiffer>false</organismsDiffer>
    <experiments>3</experiments>
</comment>
<comment type="interaction">
    <interactant intactId="EBI-741774">
        <id>Q9UNA4</id>
    </interactant>
    <interactant intactId="EBI-9675724">
        <id>Q8WW34</id>
        <label>TMEM239</label>
    </interactant>
    <organismsDiffer>false</organismsDiffer>
    <experiments>3</experiments>
</comment>
<comment type="interaction">
    <interactant intactId="EBI-741774">
        <id>Q9UNA4</id>
    </interactant>
    <interactant intactId="EBI-359276">
        <id>Q9Y4K3</id>
        <label>TRAF6</label>
    </interactant>
    <organismsDiffer>false</organismsDiffer>
    <experiments>3</experiments>
</comment>
<comment type="interaction">
    <interactant intactId="EBI-741774">
        <id>Q9UNA4</id>
    </interactant>
    <interactant intactId="EBI-739510">
        <id>Q9HCM9</id>
        <label>TRIM39</label>
    </interactant>
    <organismsDiffer>false</organismsDiffer>
    <experiments>4</experiments>
</comment>
<comment type="interaction">
    <interactant intactId="EBI-741774">
        <id>Q9UNA4</id>
    </interactant>
    <interactant intactId="EBI-3390054">
        <id>P0CG48</id>
        <label>UBC</label>
    </interactant>
    <organismsDiffer>false</organismsDiffer>
    <experiments>4</experiments>
</comment>
<comment type="interaction">
    <interactant intactId="EBI-741774">
        <id>Q9UNA4</id>
    </interactant>
    <interactant intactId="EBI-947466">
        <id>P18887</id>
        <label>XRCC1</label>
    </interactant>
    <organismsDiffer>false</organismsDiffer>
    <experiments>2</experiments>
</comment>
<comment type="interaction">
    <interactant intactId="EBI-741774">
        <id>Q9UNA4</id>
    </interactant>
    <interactant intactId="EBI-359832">
        <id>P61981</id>
        <label>YWHAG</label>
    </interactant>
    <organismsDiffer>false</organismsDiffer>
    <experiments>3</experiments>
</comment>
<comment type="interaction">
    <interactant intactId="EBI-741774">
        <id>Q9UNA4</id>
    </interactant>
    <interactant intactId="EBI-5658292">
        <id>Q8NCP5</id>
        <label>ZBTB44</label>
    </interactant>
    <organismsDiffer>false</organismsDiffer>
    <experiments>3</experiments>
</comment>
<comment type="subcellular location">
    <subcellularLocation>
        <location evidence="10">Nucleus</location>
    </subcellularLocation>
    <text evidence="1">Binding to ubiquitin mediates localization to replication forks after UV-induced DNA damage.</text>
</comment>
<comment type="tissue specificity">
    <text evidence="4 8">Ubiquitous. Highly expressed in testis.</text>
</comment>
<comment type="domain">
    <text evidence="13 14">The catalytic core consists of fingers, palm and thumb subdomains, but the fingers and thumb subdomains are much smaller than in high-fidelity polymerases; residues from five sequence motifs of the Y-family cluster around an active site cleft that can accommodate DNA and nucleotide substrates with relaxed geometric constraints, with consequently higher rates of misincorporation and low processivity.</text>
</comment>
<comment type="domain">
    <text evidence="1">Ubiquitin-binding motif 1 and ubiquitin-binding motif 2 regulate POLI protein monoubiquitination and localization to nuclear foci after UV-induced DNA damage.</text>
</comment>
<comment type="PTM">
    <text evidence="1">Monoubiquitinated. Protein monoubiquitination prevents POLI binding to ubiquitin via the ubiquitin-binding motif 1 and ubiquitin-binding motif 2.</text>
</comment>
<comment type="similarity">
    <text evidence="17">Belongs to the DNA polymerase type-Y family.</text>
</comment>
<comment type="sequence caution" evidence="17">
    <conflict type="erroneous initiation">
        <sequence resource="EMBL-CDS" id="AAD50381"/>
    </conflict>
    <text>Truncated N-terminus.</text>
</comment>
<comment type="sequence caution" evidence="17">
    <conflict type="erroneous initiation">
        <sequence resource="EMBL-CDS" id="AAF63383"/>
    </conflict>
    <text>Truncated N-terminus.</text>
</comment>
<comment type="sequence caution" evidence="17">
    <conflict type="erroneous initiation">
        <sequence resource="EMBL-CDS" id="AAH32662"/>
    </conflict>
    <text>Truncated N-terminus.</text>
</comment>
<comment type="sequence caution" evidence="17">
    <conflict type="erroneous gene model prediction">
        <sequence resource="EMBL-CDS" id="AAM11872"/>
    </conflict>
</comment>
<comment type="sequence caution" evidence="17">
    <conflict type="erroneous initiation">
        <sequence resource="EMBL-CDS" id="CAB66605"/>
    </conflict>
    <text>Truncated N-terminus.</text>
</comment>
<name>POLI_HUMAN</name>
<gene>
    <name type="primary">POLI</name>
    <name type="synonym">RAD30B</name>
</gene>
<proteinExistence type="evidence at protein level"/>
<accession>Q9UNA4</accession>
<accession>Q8N590</accession>
<accession>Q9H0S1</accession>
<accession>Q9NYH6</accession>
<feature type="chain" id="PRO_0000173988" description="DNA polymerase iota">
    <location>
        <begin position="1"/>
        <end position="740"/>
    </location>
</feature>
<feature type="domain" description="UmuC" evidence="2">
    <location>
        <begin position="55"/>
        <end position="268"/>
    </location>
</feature>
<feature type="region of interest" description="Disordered" evidence="3">
    <location>
        <begin position="1"/>
        <end position="21"/>
    </location>
</feature>
<feature type="region of interest" description="DNA-binding" evidence="13 14 18 19 21 23">
    <location>
        <begin position="249"/>
        <end position="314"/>
    </location>
</feature>
<feature type="region of interest" description="DNA-binding" evidence="13 14 18 19 21 23">
    <location>
        <begin position="325"/>
        <end position="439"/>
    </location>
</feature>
<feature type="region of interest" description="Disordered" evidence="3">
    <location>
        <begin position="581"/>
        <end position="615"/>
    </location>
</feature>
<feature type="region of interest" description="Disordered" evidence="3">
    <location>
        <begin position="671"/>
        <end position="704"/>
    </location>
</feature>
<feature type="short sequence motif" description="Ubiquitin-binding 1 (UBM1)" evidence="1">
    <location>
        <begin position="527"/>
        <end position="544"/>
    </location>
</feature>
<feature type="short sequence motif" description="Ubiquitin-binding 2 (UBM2)" evidence="1">
    <location>
        <begin position="708"/>
        <end position="725"/>
    </location>
</feature>
<feature type="compositionally biased region" description="Acidic residues" evidence="3">
    <location>
        <begin position="7"/>
        <end position="21"/>
    </location>
</feature>
<feature type="compositionally biased region" description="Low complexity" evidence="3">
    <location>
        <begin position="605"/>
        <end position="615"/>
    </location>
</feature>
<feature type="compositionally biased region" description="Basic and acidic residues" evidence="3">
    <location>
        <begin position="672"/>
        <end position="702"/>
    </location>
</feature>
<feature type="active site" description="Proton acceptor" evidence="2">
    <location>
        <position position="152"/>
    </location>
</feature>
<feature type="binding site" evidence="13 14 18 21">
    <location>
        <position position="59"/>
    </location>
    <ligand>
        <name>Mg(2+)</name>
        <dbReference type="ChEBI" id="CHEBI:18420"/>
    </ligand>
</feature>
<feature type="binding site" evidence="14 22">
    <location>
        <position position="59"/>
    </location>
    <ligand>
        <name>Mn(2+)</name>
        <dbReference type="ChEBI" id="CHEBI:29035"/>
    </ligand>
</feature>
<feature type="binding site" evidence="13 14 18 21">
    <location>
        <position position="60"/>
    </location>
    <ligand>
        <name>Mg(2+)</name>
        <dbReference type="ChEBI" id="CHEBI:18420"/>
    </ligand>
</feature>
<feature type="binding site" evidence="14 22">
    <location>
        <position position="60"/>
    </location>
    <ligand>
        <name>Mn(2+)</name>
        <dbReference type="ChEBI" id="CHEBI:29035"/>
    </ligand>
</feature>
<feature type="binding site" evidence="13 18">
    <location>
        <position position="64"/>
    </location>
    <ligand>
        <name>a 2'-deoxyribonucleoside 5'-triphosphate</name>
        <dbReference type="ChEBI" id="CHEBI:61560"/>
    </ligand>
</feature>
<feature type="binding site" evidence="13 18">
    <location>
        <position position="96"/>
    </location>
    <ligand>
        <name>a 2'-deoxyribonucleoside 5'-triphosphate</name>
        <dbReference type="ChEBI" id="CHEBI:61560"/>
    </ligand>
</feature>
<feature type="binding site" evidence="13 14 18 21">
    <location>
        <position position="151"/>
    </location>
    <ligand>
        <name>Mg(2+)</name>
        <dbReference type="ChEBI" id="CHEBI:18420"/>
    </ligand>
</feature>
<feature type="binding site" evidence="14 22">
    <location>
        <position position="151"/>
    </location>
    <ligand>
        <name>Mn(2+)</name>
        <dbReference type="ChEBI" id="CHEBI:29035"/>
    </ligand>
</feature>
<feature type="sequence variant" id="VAR_021239" description="Large decrease in catalytic activity efficiency which is partially rescued by the presence of Mn(2+) instead Mg(2+); dbSNP:rs3218778." evidence="14 15">
    <original>R</original>
    <variation>G</variation>
    <location>
        <position position="96"/>
    </location>
</feature>
<feature type="sequence variant" id="VAR_021240" description="In dbSNP:rs3218784." evidence="15">
    <original>I</original>
    <variation>M</variation>
    <location>
        <position position="261"/>
    </location>
</feature>
<feature type="sequence variant" id="VAR_021241" description="In dbSNP:rs3218783." evidence="15">
    <original>E</original>
    <variation>K</variation>
    <location>
        <position position="276"/>
    </location>
</feature>
<feature type="sequence variant" id="VAR_021242" description="In dbSNP:rs3730823." evidence="15">
    <original>H</original>
    <variation>R</variation>
    <location>
        <position position="474"/>
    </location>
</feature>
<feature type="sequence variant" id="VAR_021243" description="In dbSNP:rs3218786." evidence="6 15">
    <original>F</original>
    <variation>S</variation>
    <location>
        <position position="532"/>
    </location>
</feature>
<feature type="sequence variant" id="VAR_021244" description="In dbSNP:rs3218787." evidence="15">
    <original>C</original>
    <variation>R</variation>
    <location>
        <position position="560"/>
    </location>
</feature>
<feature type="sequence variant" id="VAR_021245" description="In dbSNP:rs8305." evidence="4 16">
    <original>A</original>
    <variation>T</variation>
    <location>
        <position position="731"/>
    </location>
</feature>
<feature type="mutagenesis site" description="Small decrease in catalytic activity efficiency which is partially rescued by the presence of Mn(2+) instead Mg(2+)." evidence="14">
    <location>
        <begin position="1"/>
        <end position="25"/>
    </location>
</feature>
<feature type="sequence conflict" description="In Ref. 3; AAD50381, 4; CAB66605 and 6; AAF63383." evidence="17" ref="3 4 6">
    <location>
        <position position="15"/>
    </location>
</feature>
<feature type="sequence conflict" description="In Ref. 4; CAB66605." evidence="17" ref="4">
    <original>S</original>
    <variation>T</variation>
    <location>
        <position position="337"/>
    </location>
</feature>
<feature type="sequence conflict" description="In Ref. 6; AAF63383." evidence="17" ref="6">
    <original>V</original>
    <variation>A</variation>
    <location>
        <position position="433"/>
    </location>
</feature>
<feature type="sequence conflict" description="In Ref. 6; AAF63383." evidence="17" ref="6">
    <original>D</original>
    <variation>G</variation>
    <location>
        <position position="514"/>
    </location>
</feature>
<feature type="strand" evidence="35">
    <location>
        <begin position="55"/>
        <end position="60"/>
    </location>
</feature>
<feature type="helix" evidence="35">
    <location>
        <begin position="63"/>
        <end position="71"/>
    </location>
</feature>
<feature type="helix" evidence="35">
    <location>
        <begin position="73"/>
        <end position="75"/>
    </location>
</feature>
<feature type="strand" evidence="33">
    <location>
        <begin position="76"/>
        <end position="78"/>
    </location>
</feature>
<feature type="strand" evidence="35">
    <location>
        <begin position="80"/>
        <end position="84"/>
    </location>
</feature>
<feature type="strand" evidence="35">
    <location>
        <begin position="87"/>
        <end position="91"/>
    </location>
</feature>
<feature type="helix" evidence="35">
    <location>
        <begin position="93"/>
        <end position="96"/>
    </location>
</feature>
<feature type="turn" evidence="35">
    <location>
        <begin position="97"/>
        <end position="99"/>
    </location>
</feature>
<feature type="strand" evidence="34">
    <location>
        <begin position="102"/>
        <end position="105"/>
    </location>
</feature>
<feature type="helix" evidence="35">
    <location>
        <begin position="106"/>
        <end position="112"/>
    </location>
</feature>
<feature type="strand" evidence="28">
    <location>
        <begin position="113"/>
        <end position="115"/>
    </location>
</feature>
<feature type="strand" evidence="35">
    <location>
        <begin position="117"/>
        <end position="120"/>
    </location>
</feature>
<feature type="helix" evidence="35">
    <location>
        <begin position="125"/>
        <end position="141"/>
    </location>
</feature>
<feature type="strand" evidence="35">
    <location>
        <begin position="145"/>
        <end position="148"/>
    </location>
</feature>
<feature type="turn" evidence="35">
    <location>
        <begin position="149"/>
        <end position="151"/>
    </location>
</feature>
<feature type="strand" evidence="35">
    <location>
        <begin position="152"/>
        <end position="156"/>
    </location>
</feature>
<feature type="helix" evidence="35">
    <location>
        <begin position="158"/>
        <end position="167"/>
    </location>
</feature>
<feature type="strand" evidence="35">
    <location>
        <begin position="170"/>
        <end position="172"/>
    </location>
</feature>
<feature type="helix" evidence="35">
    <location>
        <begin position="173"/>
        <end position="175"/>
    </location>
</feature>
<feature type="strand" evidence="35">
    <location>
        <begin position="180"/>
        <end position="182"/>
    </location>
</feature>
<feature type="helix" evidence="35">
    <location>
        <begin position="183"/>
        <end position="185"/>
    </location>
</feature>
<feature type="helix" evidence="35">
    <location>
        <begin position="193"/>
        <end position="216"/>
    </location>
</feature>
<feature type="strand" evidence="35">
    <location>
        <begin position="220"/>
        <end position="227"/>
    </location>
</feature>
<feature type="helix" evidence="35">
    <location>
        <begin position="228"/>
        <end position="235"/>
    </location>
</feature>
<feature type="strand" evidence="32">
    <location>
        <begin position="236"/>
        <end position="238"/>
    </location>
</feature>
<feature type="turn" evidence="32">
    <location>
        <begin position="239"/>
        <end position="241"/>
    </location>
</feature>
<feature type="strand" evidence="35">
    <location>
        <begin position="243"/>
        <end position="245"/>
    </location>
</feature>
<feature type="helix" evidence="35">
    <location>
        <begin position="248"/>
        <end position="250"/>
    </location>
</feature>
<feature type="helix" evidence="35">
    <location>
        <begin position="251"/>
        <end position="257"/>
    </location>
</feature>
<feature type="helix" evidence="35">
    <location>
        <begin position="261"/>
        <end position="263"/>
    </location>
</feature>
<feature type="helix" evidence="35">
    <location>
        <begin position="269"/>
        <end position="277"/>
    </location>
</feature>
<feature type="helix" evidence="35">
    <location>
        <begin position="283"/>
        <end position="288"/>
    </location>
</feature>
<feature type="helix" evidence="35">
    <location>
        <begin position="291"/>
        <end position="310"/>
    </location>
</feature>
<feature type="strand" evidence="35">
    <location>
        <begin position="325"/>
        <end position="332"/>
    </location>
</feature>
<feature type="turn" evidence="27">
    <location>
        <begin position="334"/>
        <end position="336"/>
    </location>
</feature>
<feature type="strand" evidence="35">
    <location>
        <begin position="339"/>
        <end position="341"/>
    </location>
</feature>
<feature type="helix" evidence="35">
    <location>
        <begin position="342"/>
        <end position="360"/>
    </location>
</feature>
<feature type="strand" evidence="35">
    <location>
        <begin position="362"/>
        <end position="374"/>
    </location>
</feature>
<feature type="turn" evidence="26">
    <location>
        <begin position="377"/>
        <end position="379"/>
    </location>
</feature>
<feature type="strand" evidence="35">
    <location>
        <begin position="383"/>
        <end position="388"/>
    </location>
</feature>
<feature type="turn" evidence="35">
    <location>
        <begin position="391"/>
        <end position="393"/>
    </location>
</feature>
<feature type="strand" evidence="26">
    <location>
        <begin position="397"/>
        <end position="399"/>
    </location>
</feature>
<feature type="helix" evidence="25">
    <location>
        <begin position="401"/>
        <end position="404"/>
    </location>
</feature>
<feature type="helix" evidence="35">
    <location>
        <begin position="405"/>
        <end position="419"/>
    </location>
</feature>
<feature type="strand" evidence="35">
    <location>
        <begin position="422"/>
        <end position="424"/>
    </location>
</feature>
<feature type="strand" evidence="35">
    <location>
        <begin position="427"/>
        <end position="439"/>
    </location>
</feature>
<feature type="helix" evidence="31">
    <location>
        <begin position="529"/>
        <end position="534"/>
    </location>
</feature>
<feature type="helix" evidence="31">
    <location>
        <begin position="537"/>
        <end position="544"/>
    </location>
</feature>
<feature type="strand" evidence="30">
    <location>
        <begin position="704"/>
        <end position="707"/>
    </location>
</feature>
<feature type="helix" evidence="29">
    <location>
        <begin position="710"/>
        <end position="713"/>
    </location>
</feature>
<feature type="helix" evidence="29">
    <location>
        <begin position="718"/>
        <end position="731"/>
    </location>
</feature>